<protein>
    <recommendedName>
        <fullName evidence="2">NADH-quinone oxidoreductase subunit B 2</fullName>
        <ecNumber evidence="2">7.1.1.-</ecNumber>
    </recommendedName>
    <alternativeName>
        <fullName evidence="2">NADH dehydrogenase I subunit B 2</fullName>
    </alternativeName>
    <alternativeName>
        <fullName evidence="2">NDH-1 subunit B 2</fullName>
    </alternativeName>
</protein>
<feature type="chain" id="PRO_0000358347" description="NADH-quinone oxidoreductase subunit B 2">
    <location>
        <begin position="1"/>
        <end position="159"/>
    </location>
</feature>
<feature type="binding site" evidence="2">
    <location>
        <position position="37"/>
    </location>
    <ligand>
        <name>[4Fe-4S] cluster</name>
        <dbReference type="ChEBI" id="CHEBI:49883"/>
    </ligand>
</feature>
<feature type="binding site" evidence="2">
    <location>
        <position position="38"/>
    </location>
    <ligand>
        <name>[4Fe-4S] cluster</name>
        <dbReference type="ChEBI" id="CHEBI:49883"/>
    </ligand>
</feature>
<feature type="binding site" evidence="2">
    <location>
        <position position="102"/>
    </location>
    <ligand>
        <name>[4Fe-4S] cluster</name>
        <dbReference type="ChEBI" id="CHEBI:49883"/>
    </ligand>
</feature>
<feature type="binding site" evidence="2">
    <location>
        <position position="132"/>
    </location>
    <ligand>
        <name>[4Fe-4S] cluster</name>
        <dbReference type="ChEBI" id="CHEBI:49883"/>
    </ligand>
</feature>
<evidence type="ECO:0000250" key="1"/>
<evidence type="ECO:0000255" key="2">
    <source>
        <dbReference type="HAMAP-Rule" id="MF_01356"/>
    </source>
</evidence>
<reference key="1">
    <citation type="journal article" date="2006" name="Nat. Biotechnol.">
        <title>Complete genome of the mutualistic, N2-fixing grass endophyte Azoarcus sp. strain BH72.</title>
        <authorList>
            <person name="Krause A."/>
            <person name="Ramakumar A."/>
            <person name="Bartels D."/>
            <person name="Battistoni F."/>
            <person name="Bekel T."/>
            <person name="Boch J."/>
            <person name="Boehm M."/>
            <person name="Friedrich F."/>
            <person name="Hurek T."/>
            <person name="Krause L."/>
            <person name="Linke B."/>
            <person name="McHardy A.C."/>
            <person name="Sarkar A."/>
            <person name="Schneiker S."/>
            <person name="Syed A.A."/>
            <person name="Thauer R."/>
            <person name="Vorhoelter F.-J."/>
            <person name="Weidner S."/>
            <person name="Puehler A."/>
            <person name="Reinhold-Hurek B."/>
            <person name="Kaiser O."/>
            <person name="Goesmann A."/>
        </authorList>
    </citation>
    <scope>NUCLEOTIDE SEQUENCE [LARGE SCALE GENOMIC DNA]</scope>
    <source>
        <strain>BH72</strain>
    </source>
</reference>
<keyword id="KW-0004">4Fe-4S</keyword>
<keyword id="KW-0997">Cell inner membrane</keyword>
<keyword id="KW-1003">Cell membrane</keyword>
<keyword id="KW-0408">Iron</keyword>
<keyword id="KW-0411">Iron-sulfur</keyword>
<keyword id="KW-0472">Membrane</keyword>
<keyword id="KW-0479">Metal-binding</keyword>
<keyword id="KW-0520">NAD</keyword>
<keyword id="KW-0874">Quinone</keyword>
<keyword id="KW-1185">Reference proteome</keyword>
<keyword id="KW-1278">Translocase</keyword>
<keyword id="KW-0813">Transport</keyword>
<keyword id="KW-0830">Ubiquinone</keyword>
<dbReference type="EC" id="7.1.1.-" evidence="2"/>
<dbReference type="EMBL" id="AM406670">
    <property type="protein sequence ID" value="CAL93446.1"/>
    <property type="molecule type" value="Genomic_DNA"/>
</dbReference>
<dbReference type="RefSeq" id="WP_011764563.1">
    <property type="nucleotide sequence ID" value="NC_008702.1"/>
</dbReference>
<dbReference type="SMR" id="A1K3P1"/>
<dbReference type="STRING" id="62928.azo0829"/>
<dbReference type="KEGG" id="azo:azo0829"/>
<dbReference type="eggNOG" id="COG0377">
    <property type="taxonomic scope" value="Bacteria"/>
</dbReference>
<dbReference type="HOGENOM" id="CLU_055737_7_3_4"/>
<dbReference type="Proteomes" id="UP000002588">
    <property type="component" value="Chromosome"/>
</dbReference>
<dbReference type="GO" id="GO:0005886">
    <property type="term" value="C:plasma membrane"/>
    <property type="evidence" value="ECO:0007669"/>
    <property type="project" value="UniProtKB-SubCell"/>
</dbReference>
<dbReference type="GO" id="GO:0045271">
    <property type="term" value="C:respiratory chain complex I"/>
    <property type="evidence" value="ECO:0007669"/>
    <property type="project" value="TreeGrafter"/>
</dbReference>
<dbReference type="GO" id="GO:0051539">
    <property type="term" value="F:4 iron, 4 sulfur cluster binding"/>
    <property type="evidence" value="ECO:0007669"/>
    <property type="project" value="UniProtKB-KW"/>
</dbReference>
<dbReference type="GO" id="GO:0005506">
    <property type="term" value="F:iron ion binding"/>
    <property type="evidence" value="ECO:0007669"/>
    <property type="project" value="UniProtKB-UniRule"/>
</dbReference>
<dbReference type="GO" id="GO:0008137">
    <property type="term" value="F:NADH dehydrogenase (ubiquinone) activity"/>
    <property type="evidence" value="ECO:0007669"/>
    <property type="project" value="InterPro"/>
</dbReference>
<dbReference type="GO" id="GO:0050136">
    <property type="term" value="F:NADH:ubiquinone reductase (non-electrogenic) activity"/>
    <property type="evidence" value="ECO:0007669"/>
    <property type="project" value="UniProtKB-UniRule"/>
</dbReference>
<dbReference type="GO" id="GO:0048038">
    <property type="term" value="F:quinone binding"/>
    <property type="evidence" value="ECO:0007669"/>
    <property type="project" value="UniProtKB-KW"/>
</dbReference>
<dbReference type="GO" id="GO:0009060">
    <property type="term" value="P:aerobic respiration"/>
    <property type="evidence" value="ECO:0007669"/>
    <property type="project" value="TreeGrafter"/>
</dbReference>
<dbReference type="GO" id="GO:0015990">
    <property type="term" value="P:electron transport coupled proton transport"/>
    <property type="evidence" value="ECO:0007669"/>
    <property type="project" value="TreeGrafter"/>
</dbReference>
<dbReference type="GO" id="GO:0032981">
    <property type="term" value="P:mitochondrial respiratory chain complex I assembly"/>
    <property type="evidence" value="ECO:0007669"/>
    <property type="project" value="TreeGrafter"/>
</dbReference>
<dbReference type="FunFam" id="3.40.50.12280:FF:000001">
    <property type="entry name" value="NADH-quinone oxidoreductase subunit B 2"/>
    <property type="match status" value="1"/>
</dbReference>
<dbReference type="Gene3D" id="3.40.50.12280">
    <property type="match status" value="1"/>
</dbReference>
<dbReference type="HAMAP" id="MF_01356">
    <property type="entry name" value="NDH1_NuoB"/>
    <property type="match status" value="1"/>
</dbReference>
<dbReference type="InterPro" id="IPR006137">
    <property type="entry name" value="NADH_UbQ_OxRdtase-like_20kDa"/>
</dbReference>
<dbReference type="InterPro" id="IPR006138">
    <property type="entry name" value="NADH_UQ_OxRdtase_20Kd_su"/>
</dbReference>
<dbReference type="NCBIfam" id="TIGR01957">
    <property type="entry name" value="nuoB_fam"/>
    <property type="match status" value="1"/>
</dbReference>
<dbReference type="NCBIfam" id="NF005012">
    <property type="entry name" value="PRK06411.1"/>
    <property type="match status" value="1"/>
</dbReference>
<dbReference type="PANTHER" id="PTHR11995">
    <property type="entry name" value="NADH DEHYDROGENASE"/>
    <property type="match status" value="1"/>
</dbReference>
<dbReference type="PANTHER" id="PTHR11995:SF14">
    <property type="entry name" value="NADH DEHYDROGENASE [UBIQUINONE] IRON-SULFUR PROTEIN 7, MITOCHONDRIAL"/>
    <property type="match status" value="1"/>
</dbReference>
<dbReference type="Pfam" id="PF01058">
    <property type="entry name" value="Oxidored_q6"/>
    <property type="match status" value="1"/>
</dbReference>
<dbReference type="SUPFAM" id="SSF56770">
    <property type="entry name" value="HydA/Nqo6-like"/>
    <property type="match status" value="1"/>
</dbReference>
<dbReference type="PROSITE" id="PS01150">
    <property type="entry name" value="COMPLEX1_20K"/>
    <property type="match status" value="1"/>
</dbReference>
<organism>
    <name type="scientific">Azoarcus sp. (strain BH72)</name>
    <dbReference type="NCBI Taxonomy" id="418699"/>
    <lineage>
        <taxon>Bacteria</taxon>
        <taxon>Pseudomonadati</taxon>
        <taxon>Pseudomonadota</taxon>
        <taxon>Betaproteobacteria</taxon>
        <taxon>Rhodocyclales</taxon>
        <taxon>Zoogloeaceae</taxon>
        <taxon>Azoarcus</taxon>
    </lineage>
</organism>
<proteinExistence type="inferred from homology"/>
<sequence>MQTPTLHGDGFLLTRLDTLCDMVRSNSMWYLTFGLACCAVEMMQAAASRYDMDRFGMIPRASPRQADLIIVAGTLTNKMAPAIRKIYDQMAEPRYVISMGSCANGGGYYHYSYSVARGCDRILPVDIYIPGCPPTAEALLYGLIQLQNKLKRPPAVIAR</sequence>
<name>NUOB2_AZOSB</name>
<accession>A1K3P1</accession>
<gene>
    <name evidence="2" type="primary">nuoB2</name>
    <name type="ordered locus">azo0829</name>
</gene>
<comment type="function">
    <text evidence="1">NDH-1 shuttles electrons from NADH, via FMN and iron-sulfur (Fe-S) centers, to quinones in the respiratory chain. Couples the redox reaction to proton translocation (for every two electrons transferred, four hydrogen ions are translocated across the cytoplasmic membrane), and thus conserves the redox energy in a proton gradient (By similarity).</text>
</comment>
<comment type="catalytic activity">
    <reaction evidence="2">
        <text>a quinone + NADH + 5 H(+)(in) = a quinol + NAD(+) + 4 H(+)(out)</text>
        <dbReference type="Rhea" id="RHEA:57888"/>
        <dbReference type="ChEBI" id="CHEBI:15378"/>
        <dbReference type="ChEBI" id="CHEBI:24646"/>
        <dbReference type="ChEBI" id="CHEBI:57540"/>
        <dbReference type="ChEBI" id="CHEBI:57945"/>
        <dbReference type="ChEBI" id="CHEBI:132124"/>
    </reaction>
</comment>
<comment type="cofactor">
    <cofactor evidence="2">
        <name>[4Fe-4S] cluster</name>
        <dbReference type="ChEBI" id="CHEBI:49883"/>
    </cofactor>
    <text evidence="2">Binds 1 [4Fe-4S] cluster.</text>
</comment>
<comment type="subunit">
    <text evidence="2">NDH-1 is composed of 14 different subunits. Subunits NuoB, C, D, E, F, and G constitute the peripheral sector of the complex.</text>
</comment>
<comment type="subcellular location">
    <subcellularLocation>
        <location evidence="2">Cell inner membrane</location>
        <topology evidence="2">Peripheral membrane protein</topology>
        <orientation evidence="2">Cytoplasmic side</orientation>
    </subcellularLocation>
</comment>
<comment type="similarity">
    <text evidence="2">Belongs to the complex I 20 kDa subunit family.</text>
</comment>